<sequence length="353" mass="38617">MSRFWTDKIASLDPYVPGEQPQDKKYIKLNTNESPYSPSPKAIEAMALEVSERLRLYPDPNCATLKNALAKSYQLDANQVFVGNGSDEVLALAFMGYFAGGKPLAFADITYSFYKVYAGLYSIEPKLIPLNDDFDIIPADYENLDVSGVVITNPNAPTGKALPLADIEAILKANPDVVVLVDEAYVDFGAQSAVSLINQYPNLLVVQTLSKSRALAGIRVGYALGHADLIEGLERLKNSFNSYPIDRVALVGATAAVEDEAYLKEICDKTIATREQSVKDLEALGFSIIPSATNFVFATHPEKNAEQIYLTLKERGILVRFFGSNKPRIGNYLRITIGTDEEMAALTAALKTL</sequence>
<gene>
    <name evidence="1" type="primary">hisC</name>
    <name type="ordered locus">Mmwyl1_1133</name>
</gene>
<name>HIS8_MARMS</name>
<comment type="catalytic activity">
    <reaction evidence="1">
        <text>L-histidinol phosphate + 2-oxoglutarate = 3-(imidazol-4-yl)-2-oxopropyl phosphate + L-glutamate</text>
        <dbReference type="Rhea" id="RHEA:23744"/>
        <dbReference type="ChEBI" id="CHEBI:16810"/>
        <dbReference type="ChEBI" id="CHEBI:29985"/>
        <dbReference type="ChEBI" id="CHEBI:57766"/>
        <dbReference type="ChEBI" id="CHEBI:57980"/>
        <dbReference type="EC" id="2.6.1.9"/>
    </reaction>
</comment>
<comment type="cofactor">
    <cofactor evidence="1">
        <name>pyridoxal 5'-phosphate</name>
        <dbReference type="ChEBI" id="CHEBI:597326"/>
    </cofactor>
</comment>
<comment type="pathway">
    <text evidence="1">Amino-acid biosynthesis; L-histidine biosynthesis; L-histidine from 5-phospho-alpha-D-ribose 1-diphosphate: step 7/9.</text>
</comment>
<comment type="subunit">
    <text evidence="1">Homodimer.</text>
</comment>
<comment type="similarity">
    <text evidence="1">Belongs to the class-II pyridoxal-phosphate-dependent aminotransferase family. Histidinol-phosphate aminotransferase subfamily.</text>
</comment>
<keyword id="KW-0028">Amino-acid biosynthesis</keyword>
<keyword id="KW-0032">Aminotransferase</keyword>
<keyword id="KW-0368">Histidine biosynthesis</keyword>
<keyword id="KW-0663">Pyridoxal phosphate</keyword>
<keyword id="KW-0808">Transferase</keyword>
<proteinExistence type="inferred from homology"/>
<protein>
    <recommendedName>
        <fullName evidence="1">Histidinol-phosphate aminotransferase</fullName>
        <ecNumber evidence="1">2.6.1.9</ecNumber>
    </recommendedName>
    <alternativeName>
        <fullName evidence="1">Imidazole acetol-phosphate transaminase</fullName>
    </alternativeName>
</protein>
<feature type="chain" id="PRO_1000084196" description="Histidinol-phosphate aminotransferase">
    <location>
        <begin position="1"/>
        <end position="353"/>
    </location>
</feature>
<feature type="modified residue" description="N6-(pyridoxal phosphate)lysine" evidence="1">
    <location>
        <position position="211"/>
    </location>
</feature>
<organism>
    <name type="scientific">Marinomonas sp. (strain MWYL1)</name>
    <dbReference type="NCBI Taxonomy" id="400668"/>
    <lineage>
        <taxon>Bacteria</taxon>
        <taxon>Pseudomonadati</taxon>
        <taxon>Pseudomonadota</taxon>
        <taxon>Gammaproteobacteria</taxon>
        <taxon>Oceanospirillales</taxon>
        <taxon>Oceanospirillaceae</taxon>
        <taxon>Marinomonas</taxon>
    </lineage>
</organism>
<dbReference type="EC" id="2.6.1.9" evidence="1"/>
<dbReference type="EMBL" id="CP000749">
    <property type="protein sequence ID" value="ABR70062.1"/>
    <property type="molecule type" value="Genomic_DNA"/>
</dbReference>
<dbReference type="SMR" id="A6VUD3"/>
<dbReference type="STRING" id="400668.Mmwyl1_1133"/>
<dbReference type="KEGG" id="mmw:Mmwyl1_1133"/>
<dbReference type="eggNOG" id="COG0079">
    <property type="taxonomic scope" value="Bacteria"/>
</dbReference>
<dbReference type="HOGENOM" id="CLU_017584_3_0_6"/>
<dbReference type="OrthoDB" id="9809616at2"/>
<dbReference type="UniPathway" id="UPA00031">
    <property type="reaction ID" value="UER00012"/>
</dbReference>
<dbReference type="GO" id="GO:0004400">
    <property type="term" value="F:histidinol-phosphate transaminase activity"/>
    <property type="evidence" value="ECO:0007669"/>
    <property type="project" value="UniProtKB-UniRule"/>
</dbReference>
<dbReference type="GO" id="GO:0030170">
    <property type="term" value="F:pyridoxal phosphate binding"/>
    <property type="evidence" value="ECO:0007669"/>
    <property type="project" value="InterPro"/>
</dbReference>
<dbReference type="GO" id="GO:0000105">
    <property type="term" value="P:L-histidine biosynthetic process"/>
    <property type="evidence" value="ECO:0007669"/>
    <property type="project" value="UniProtKB-UniRule"/>
</dbReference>
<dbReference type="CDD" id="cd00609">
    <property type="entry name" value="AAT_like"/>
    <property type="match status" value="1"/>
</dbReference>
<dbReference type="Gene3D" id="3.90.1150.10">
    <property type="entry name" value="Aspartate Aminotransferase, domain 1"/>
    <property type="match status" value="1"/>
</dbReference>
<dbReference type="Gene3D" id="3.40.640.10">
    <property type="entry name" value="Type I PLP-dependent aspartate aminotransferase-like (Major domain)"/>
    <property type="match status" value="1"/>
</dbReference>
<dbReference type="HAMAP" id="MF_01023">
    <property type="entry name" value="HisC_aminotrans_2"/>
    <property type="match status" value="1"/>
</dbReference>
<dbReference type="InterPro" id="IPR001917">
    <property type="entry name" value="Aminotrans_II_pyridoxalP_BS"/>
</dbReference>
<dbReference type="InterPro" id="IPR004839">
    <property type="entry name" value="Aminotransferase_I/II_large"/>
</dbReference>
<dbReference type="InterPro" id="IPR005861">
    <property type="entry name" value="HisP_aminotrans"/>
</dbReference>
<dbReference type="InterPro" id="IPR015424">
    <property type="entry name" value="PyrdxlP-dep_Trfase"/>
</dbReference>
<dbReference type="InterPro" id="IPR015421">
    <property type="entry name" value="PyrdxlP-dep_Trfase_major"/>
</dbReference>
<dbReference type="InterPro" id="IPR015422">
    <property type="entry name" value="PyrdxlP-dep_Trfase_small"/>
</dbReference>
<dbReference type="NCBIfam" id="TIGR01141">
    <property type="entry name" value="hisC"/>
    <property type="match status" value="1"/>
</dbReference>
<dbReference type="PANTHER" id="PTHR42885:SF2">
    <property type="entry name" value="HISTIDINOL-PHOSPHATE AMINOTRANSFERASE"/>
    <property type="match status" value="1"/>
</dbReference>
<dbReference type="PANTHER" id="PTHR42885">
    <property type="entry name" value="HISTIDINOL-PHOSPHATE AMINOTRANSFERASE-RELATED"/>
    <property type="match status" value="1"/>
</dbReference>
<dbReference type="Pfam" id="PF00155">
    <property type="entry name" value="Aminotran_1_2"/>
    <property type="match status" value="1"/>
</dbReference>
<dbReference type="SUPFAM" id="SSF53383">
    <property type="entry name" value="PLP-dependent transferases"/>
    <property type="match status" value="1"/>
</dbReference>
<dbReference type="PROSITE" id="PS00599">
    <property type="entry name" value="AA_TRANSFER_CLASS_2"/>
    <property type="match status" value="1"/>
</dbReference>
<accession>A6VUD3</accession>
<evidence type="ECO:0000255" key="1">
    <source>
        <dbReference type="HAMAP-Rule" id="MF_01023"/>
    </source>
</evidence>
<reference key="1">
    <citation type="submission" date="2007-06" db="EMBL/GenBank/DDBJ databases">
        <title>Complete sequence of Marinomonas sp. MWYL1.</title>
        <authorList>
            <consortium name="US DOE Joint Genome Institute"/>
            <person name="Copeland A."/>
            <person name="Lucas S."/>
            <person name="Lapidus A."/>
            <person name="Barry K."/>
            <person name="Glavina del Rio T."/>
            <person name="Dalin E."/>
            <person name="Tice H."/>
            <person name="Pitluck S."/>
            <person name="Kiss H."/>
            <person name="Brettin T."/>
            <person name="Bruce D."/>
            <person name="Detter J.C."/>
            <person name="Han C."/>
            <person name="Schmutz J."/>
            <person name="Larimer F."/>
            <person name="Land M."/>
            <person name="Hauser L."/>
            <person name="Kyrpides N."/>
            <person name="Kim E."/>
            <person name="Johnston A.W.B."/>
            <person name="Todd J.D."/>
            <person name="Rogers R."/>
            <person name="Wexler M."/>
            <person name="Bond P.L."/>
            <person name="Li Y."/>
            <person name="Richardson P."/>
        </authorList>
    </citation>
    <scope>NUCLEOTIDE SEQUENCE [LARGE SCALE GENOMIC DNA]</scope>
    <source>
        <strain>MWYL1</strain>
    </source>
</reference>